<comment type="catalytic activity">
    <reaction evidence="1">
        <text>thymidine + ATP = dTMP + ADP + H(+)</text>
        <dbReference type="Rhea" id="RHEA:19129"/>
        <dbReference type="ChEBI" id="CHEBI:15378"/>
        <dbReference type="ChEBI" id="CHEBI:17748"/>
        <dbReference type="ChEBI" id="CHEBI:30616"/>
        <dbReference type="ChEBI" id="CHEBI:63528"/>
        <dbReference type="ChEBI" id="CHEBI:456216"/>
        <dbReference type="EC" id="2.7.1.21"/>
    </reaction>
</comment>
<comment type="subunit">
    <text evidence="1">Homotetramer.</text>
</comment>
<comment type="subcellular location">
    <subcellularLocation>
        <location evidence="1">Cytoplasm</location>
    </subcellularLocation>
</comment>
<comment type="similarity">
    <text evidence="1">Belongs to the thymidine kinase family.</text>
</comment>
<proteinExistence type="inferred from homology"/>
<gene>
    <name evidence="1" type="primary">tdk</name>
    <name type="ordered locus">HI_0529</name>
</gene>
<accession>P44309</accession>
<feature type="chain" id="PRO_0000174979" description="Thymidine kinase">
    <location>
        <begin position="1"/>
        <end position="193"/>
    </location>
</feature>
<feature type="active site" description="Proton acceptor" evidence="1">
    <location>
        <position position="88"/>
    </location>
</feature>
<feature type="binding site" evidence="1">
    <location>
        <begin position="9"/>
        <end position="16"/>
    </location>
    <ligand>
        <name>ATP</name>
        <dbReference type="ChEBI" id="CHEBI:30616"/>
    </ligand>
</feature>
<feature type="binding site" evidence="1">
    <location>
        <begin position="87"/>
        <end position="90"/>
    </location>
    <ligand>
        <name>ATP</name>
        <dbReference type="ChEBI" id="CHEBI:30616"/>
    </ligand>
</feature>
<feature type="binding site" evidence="1">
    <location>
        <position position="145"/>
    </location>
    <ligand>
        <name>Zn(2+)</name>
        <dbReference type="ChEBI" id="CHEBI:29105"/>
    </ligand>
</feature>
<feature type="binding site" evidence="1">
    <location>
        <position position="147"/>
    </location>
    <ligand>
        <name>Zn(2+)</name>
        <dbReference type="ChEBI" id="CHEBI:29105"/>
    </ligand>
</feature>
<feature type="binding site" evidence="1">
    <location>
        <position position="182"/>
    </location>
    <ligand>
        <name>Zn(2+)</name>
        <dbReference type="ChEBI" id="CHEBI:29105"/>
    </ligand>
</feature>
<feature type="binding site" evidence="1">
    <location>
        <position position="185"/>
    </location>
    <ligand>
        <name>Zn(2+)</name>
        <dbReference type="ChEBI" id="CHEBI:29105"/>
    </ligand>
</feature>
<dbReference type="EC" id="2.7.1.21" evidence="1"/>
<dbReference type="EMBL" id="L42023">
    <property type="protein sequence ID" value="AAC22186.1"/>
    <property type="molecule type" value="Genomic_DNA"/>
</dbReference>
<dbReference type="PIR" id="G64074">
    <property type="entry name" value="G64074"/>
</dbReference>
<dbReference type="RefSeq" id="NP_438687.2">
    <property type="nucleotide sequence ID" value="NC_000907.1"/>
</dbReference>
<dbReference type="SMR" id="P44309"/>
<dbReference type="STRING" id="71421.HI_0529"/>
<dbReference type="EnsemblBacteria" id="AAC22186">
    <property type="protein sequence ID" value="AAC22186"/>
    <property type="gene ID" value="HI_0529"/>
</dbReference>
<dbReference type="KEGG" id="hin:HI_0529"/>
<dbReference type="PATRIC" id="fig|71421.8.peg.548"/>
<dbReference type="eggNOG" id="COG1435">
    <property type="taxonomic scope" value="Bacteria"/>
</dbReference>
<dbReference type="HOGENOM" id="CLU_064400_2_1_6"/>
<dbReference type="OrthoDB" id="9781579at2"/>
<dbReference type="PhylomeDB" id="P44309"/>
<dbReference type="Proteomes" id="UP000000579">
    <property type="component" value="Chromosome"/>
</dbReference>
<dbReference type="GO" id="GO:0005829">
    <property type="term" value="C:cytosol"/>
    <property type="evidence" value="ECO:0000318"/>
    <property type="project" value="GO_Central"/>
</dbReference>
<dbReference type="GO" id="GO:0005524">
    <property type="term" value="F:ATP binding"/>
    <property type="evidence" value="ECO:0007669"/>
    <property type="project" value="UniProtKB-UniRule"/>
</dbReference>
<dbReference type="GO" id="GO:0004797">
    <property type="term" value="F:thymidine kinase activity"/>
    <property type="evidence" value="ECO:0000318"/>
    <property type="project" value="GO_Central"/>
</dbReference>
<dbReference type="GO" id="GO:0008270">
    <property type="term" value="F:zinc ion binding"/>
    <property type="evidence" value="ECO:0007669"/>
    <property type="project" value="UniProtKB-UniRule"/>
</dbReference>
<dbReference type="GO" id="GO:0071897">
    <property type="term" value="P:DNA biosynthetic process"/>
    <property type="evidence" value="ECO:0007669"/>
    <property type="project" value="UniProtKB-KW"/>
</dbReference>
<dbReference type="GO" id="GO:0046104">
    <property type="term" value="P:thymidine metabolic process"/>
    <property type="evidence" value="ECO:0000318"/>
    <property type="project" value="GO_Central"/>
</dbReference>
<dbReference type="FunFam" id="3.30.60.20:FF:000074">
    <property type="entry name" value="Thymidine kinase"/>
    <property type="match status" value="1"/>
</dbReference>
<dbReference type="FunFam" id="3.40.50.300:FF:000323">
    <property type="entry name" value="Thymidine kinase"/>
    <property type="match status" value="1"/>
</dbReference>
<dbReference type="Gene3D" id="3.30.60.20">
    <property type="match status" value="1"/>
</dbReference>
<dbReference type="Gene3D" id="3.40.50.300">
    <property type="entry name" value="P-loop containing nucleotide triphosphate hydrolases"/>
    <property type="match status" value="1"/>
</dbReference>
<dbReference type="HAMAP" id="MF_00124">
    <property type="entry name" value="Thymidine_kinase"/>
    <property type="match status" value="1"/>
</dbReference>
<dbReference type="InterPro" id="IPR027417">
    <property type="entry name" value="P-loop_NTPase"/>
</dbReference>
<dbReference type="InterPro" id="IPR001267">
    <property type="entry name" value="Thymidine_kinase"/>
</dbReference>
<dbReference type="InterPro" id="IPR020633">
    <property type="entry name" value="Thymidine_kinase_CS"/>
</dbReference>
<dbReference type="NCBIfam" id="NF003300">
    <property type="entry name" value="PRK04296.1-5"/>
    <property type="match status" value="1"/>
</dbReference>
<dbReference type="PANTHER" id="PTHR11441">
    <property type="entry name" value="THYMIDINE KINASE"/>
    <property type="match status" value="1"/>
</dbReference>
<dbReference type="PANTHER" id="PTHR11441:SF0">
    <property type="entry name" value="THYMIDINE KINASE, CYTOSOLIC"/>
    <property type="match status" value="1"/>
</dbReference>
<dbReference type="Pfam" id="PF00265">
    <property type="entry name" value="TK"/>
    <property type="match status" value="1"/>
</dbReference>
<dbReference type="PIRSF" id="PIRSF035805">
    <property type="entry name" value="TK_cell"/>
    <property type="match status" value="1"/>
</dbReference>
<dbReference type="SUPFAM" id="SSF57716">
    <property type="entry name" value="Glucocorticoid receptor-like (DNA-binding domain)"/>
    <property type="match status" value="1"/>
</dbReference>
<dbReference type="SUPFAM" id="SSF52540">
    <property type="entry name" value="P-loop containing nucleoside triphosphate hydrolases"/>
    <property type="match status" value="1"/>
</dbReference>
<dbReference type="PROSITE" id="PS00603">
    <property type="entry name" value="TK_CELLULAR_TYPE"/>
    <property type="match status" value="1"/>
</dbReference>
<sequence length="193" mass="22177">MAKLYFYYSTMNAGKSTTLLQSSYNYRERDMNTLVYTAAIDDRFGVGKVTSRIGISQDAFLFRSETNLFDEINEHLKKEKVHCVLVDEAQFLSKQQVYQLSDVVDKLKIPVLCYGLRTDFQAELFEGSKYLLAWADQLEELKTICYCGRKANFVLRLNDQGEVIKEGAQIQIGGNDSYLSVCRLHYKEKCGQI</sequence>
<protein>
    <recommendedName>
        <fullName evidence="1">Thymidine kinase</fullName>
        <ecNumber evidence="1">2.7.1.21</ecNumber>
    </recommendedName>
</protein>
<keyword id="KW-0067">ATP-binding</keyword>
<keyword id="KW-0963">Cytoplasm</keyword>
<keyword id="KW-0237">DNA synthesis</keyword>
<keyword id="KW-0418">Kinase</keyword>
<keyword id="KW-0479">Metal-binding</keyword>
<keyword id="KW-0547">Nucleotide-binding</keyword>
<keyword id="KW-1185">Reference proteome</keyword>
<keyword id="KW-0808">Transferase</keyword>
<keyword id="KW-0862">Zinc</keyword>
<evidence type="ECO:0000255" key="1">
    <source>
        <dbReference type="HAMAP-Rule" id="MF_00124"/>
    </source>
</evidence>
<organism>
    <name type="scientific">Haemophilus influenzae (strain ATCC 51907 / DSM 11121 / KW20 / Rd)</name>
    <dbReference type="NCBI Taxonomy" id="71421"/>
    <lineage>
        <taxon>Bacteria</taxon>
        <taxon>Pseudomonadati</taxon>
        <taxon>Pseudomonadota</taxon>
        <taxon>Gammaproteobacteria</taxon>
        <taxon>Pasteurellales</taxon>
        <taxon>Pasteurellaceae</taxon>
        <taxon>Haemophilus</taxon>
    </lineage>
</organism>
<reference key="1">
    <citation type="journal article" date="1995" name="Science">
        <title>Whole-genome random sequencing and assembly of Haemophilus influenzae Rd.</title>
        <authorList>
            <person name="Fleischmann R.D."/>
            <person name="Adams M.D."/>
            <person name="White O."/>
            <person name="Clayton R.A."/>
            <person name="Kirkness E.F."/>
            <person name="Kerlavage A.R."/>
            <person name="Bult C.J."/>
            <person name="Tomb J.-F."/>
            <person name="Dougherty B.A."/>
            <person name="Merrick J.M."/>
            <person name="McKenney K."/>
            <person name="Sutton G.G."/>
            <person name="FitzHugh W."/>
            <person name="Fields C.A."/>
            <person name="Gocayne J.D."/>
            <person name="Scott J.D."/>
            <person name="Shirley R."/>
            <person name="Liu L.-I."/>
            <person name="Glodek A."/>
            <person name="Kelley J.M."/>
            <person name="Weidman J.F."/>
            <person name="Phillips C.A."/>
            <person name="Spriggs T."/>
            <person name="Hedblom E."/>
            <person name="Cotton M.D."/>
            <person name="Utterback T.R."/>
            <person name="Hanna M.C."/>
            <person name="Nguyen D.T."/>
            <person name="Saudek D.M."/>
            <person name="Brandon R.C."/>
            <person name="Fine L.D."/>
            <person name="Fritchman J.L."/>
            <person name="Fuhrmann J.L."/>
            <person name="Geoghagen N.S.M."/>
            <person name="Gnehm C.L."/>
            <person name="McDonald L.A."/>
            <person name="Small K.V."/>
            <person name="Fraser C.M."/>
            <person name="Smith H.O."/>
            <person name="Venter J.C."/>
        </authorList>
    </citation>
    <scope>NUCLEOTIDE SEQUENCE [LARGE SCALE GENOMIC DNA]</scope>
    <source>
        <strain>ATCC 51907 / DSM 11121 / KW20 / Rd</strain>
    </source>
</reference>
<name>KITH_HAEIN</name>